<organism>
    <name type="scientific">Geobacillus kaustophilus (strain HTA426)</name>
    <dbReference type="NCBI Taxonomy" id="235909"/>
    <lineage>
        <taxon>Bacteria</taxon>
        <taxon>Bacillati</taxon>
        <taxon>Bacillota</taxon>
        <taxon>Bacilli</taxon>
        <taxon>Bacillales</taxon>
        <taxon>Anoxybacillaceae</taxon>
        <taxon>Geobacillus</taxon>
        <taxon>Geobacillus thermoleovorans group</taxon>
    </lineage>
</organism>
<gene>
    <name evidence="1" type="primary">xseB</name>
    <name type="ordered locus">GK2394</name>
    <name type="ORF">GKC03</name>
</gene>
<accession>Q75TB9</accession>
<accession>Q5KXA7</accession>
<name>EX7S_GEOKA</name>
<dbReference type="EC" id="3.1.11.6" evidence="1"/>
<dbReference type="EMBL" id="AB126620">
    <property type="protein sequence ID" value="BAD18359.1"/>
    <property type="status" value="ALT_INIT"/>
    <property type="molecule type" value="Genomic_DNA"/>
</dbReference>
<dbReference type="EMBL" id="BA000043">
    <property type="protein sequence ID" value="BAD76679.1"/>
    <property type="status" value="ALT_INIT"/>
    <property type="molecule type" value="Genomic_DNA"/>
</dbReference>
<dbReference type="SMR" id="Q75TB9"/>
<dbReference type="STRING" id="235909.GK2394"/>
<dbReference type="KEGG" id="gka:GK2394"/>
<dbReference type="eggNOG" id="COG1722">
    <property type="taxonomic scope" value="Bacteria"/>
</dbReference>
<dbReference type="HOGENOM" id="CLU_145918_3_1_9"/>
<dbReference type="Proteomes" id="UP000001172">
    <property type="component" value="Chromosome"/>
</dbReference>
<dbReference type="GO" id="GO:0005829">
    <property type="term" value="C:cytosol"/>
    <property type="evidence" value="ECO:0007669"/>
    <property type="project" value="TreeGrafter"/>
</dbReference>
<dbReference type="GO" id="GO:0009318">
    <property type="term" value="C:exodeoxyribonuclease VII complex"/>
    <property type="evidence" value="ECO:0007669"/>
    <property type="project" value="InterPro"/>
</dbReference>
<dbReference type="GO" id="GO:0008855">
    <property type="term" value="F:exodeoxyribonuclease VII activity"/>
    <property type="evidence" value="ECO:0007669"/>
    <property type="project" value="UniProtKB-UniRule"/>
</dbReference>
<dbReference type="GO" id="GO:0006308">
    <property type="term" value="P:DNA catabolic process"/>
    <property type="evidence" value="ECO:0007669"/>
    <property type="project" value="UniProtKB-UniRule"/>
</dbReference>
<dbReference type="Gene3D" id="1.10.287.1040">
    <property type="entry name" value="Exonuclease VII, small subunit"/>
    <property type="match status" value="1"/>
</dbReference>
<dbReference type="HAMAP" id="MF_00337">
    <property type="entry name" value="Exonuc_7_S"/>
    <property type="match status" value="1"/>
</dbReference>
<dbReference type="InterPro" id="IPR003761">
    <property type="entry name" value="Exonuc_VII_S"/>
</dbReference>
<dbReference type="InterPro" id="IPR037004">
    <property type="entry name" value="Exonuc_VII_ssu_sf"/>
</dbReference>
<dbReference type="NCBIfam" id="NF002138">
    <property type="entry name" value="PRK00977.1-2"/>
    <property type="match status" value="1"/>
</dbReference>
<dbReference type="NCBIfam" id="NF010666">
    <property type="entry name" value="PRK14063.1"/>
    <property type="match status" value="1"/>
</dbReference>
<dbReference type="NCBIfam" id="TIGR01280">
    <property type="entry name" value="xseB"/>
    <property type="match status" value="1"/>
</dbReference>
<dbReference type="PANTHER" id="PTHR34137">
    <property type="entry name" value="EXODEOXYRIBONUCLEASE 7 SMALL SUBUNIT"/>
    <property type="match status" value="1"/>
</dbReference>
<dbReference type="PANTHER" id="PTHR34137:SF1">
    <property type="entry name" value="EXODEOXYRIBONUCLEASE 7 SMALL SUBUNIT"/>
    <property type="match status" value="1"/>
</dbReference>
<dbReference type="Pfam" id="PF02609">
    <property type="entry name" value="Exonuc_VII_S"/>
    <property type="match status" value="1"/>
</dbReference>
<dbReference type="SUPFAM" id="SSF116842">
    <property type="entry name" value="XseB-like"/>
    <property type="match status" value="1"/>
</dbReference>
<sequence>MTDVKKNENMTFEEAMKKLEEIVEKLEEGNVPLEEAIAFFQEGMKLSKLCHDKLQHVEKQLEYMLREDGELVPFSPEEE</sequence>
<comment type="function">
    <text evidence="1">Bidirectionally degrades single-stranded DNA into large acid-insoluble oligonucleotides, which are then degraded further into small acid-soluble oligonucleotides.</text>
</comment>
<comment type="catalytic activity">
    <reaction evidence="1">
        <text>Exonucleolytic cleavage in either 5'- to 3'- or 3'- to 5'-direction to yield nucleoside 5'-phosphates.</text>
        <dbReference type="EC" id="3.1.11.6"/>
    </reaction>
</comment>
<comment type="subunit">
    <text evidence="1">Heterooligomer composed of large and small subunits.</text>
</comment>
<comment type="subcellular location">
    <subcellularLocation>
        <location evidence="1">Cytoplasm</location>
    </subcellularLocation>
</comment>
<comment type="similarity">
    <text evidence="1">Belongs to the XseB family.</text>
</comment>
<comment type="sequence caution" evidence="2">
    <conflict type="erroneous initiation">
        <sequence resource="EMBL-CDS" id="BAD18359"/>
    </conflict>
</comment>
<comment type="sequence caution" evidence="2">
    <conflict type="erroneous initiation">
        <sequence resource="EMBL-CDS" id="BAD76679"/>
    </conflict>
</comment>
<feature type="chain" id="PRO_0000303708" description="Exodeoxyribonuclease 7 small subunit">
    <location>
        <begin position="1"/>
        <end position="79"/>
    </location>
</feature>
<evidence type="ECO:0000255" key="1">
    <source>
        <dbReference type="HAMAP-Rule" id="MF_00337"/>
    </source>
</evidence>
<evidence type="ECO:0000305" key="2"/>
<keyword id="KW-0963">Cytoplasm</keyword>
<keyword id="KW-0269">Exonuclease</keyword>
<keyword id="KW-0378">Hydrolase</keyword>
<keyword id="KW-0540">Nuclease</keyword>
<keyword id="KW-1185">Reference proteome</keyword>
<protein>
    <recommendedName>
        <fullName evidence="1">Exodeoxyribonuclease 7 small subunit</fullName>
        <ecNumber evidence="1">3.1.11.6</ecNumber>
    </recommendedName>
    <alternativeName>
        <fullName evidence="1">Exodeoxyribonuclease VII small subunit</fullName>
        <shortName evidence="1">Exonuclease VII small subunit</shortName>
    </alternativeName>
</protein>
<reference key="1">
    <citation type="journal article" date="2004" name="Extremophiles">
        <title>Genomic characterization of thermophilic Geobacillus species isolated from the deepest sea mud of the Mariana Trench.</title>
        <authorList>
            <person name="Takami H."/>
            <person name="Nishi S."/>
            <person name="Lu J."/>
            <person name="Shimamura S."/>
            <person name="Takaki Y."/>
        </authorList>
    </citation>
    <scope>NUCLEOTIDE SEQUENCE [GENOMIC DNA]</scope>
    <source>
        <strain>HTA426</strain>
    </source>
</reference>
<reference key="2">
    <citation type="journal article" date="2004" name="Nucleic Acids Res.">
        <title>Thermoadaptation trait revealed by the genome sequence of thermophilic Geobacillus kaustophilus.</title>
        <authorList>
            <person name="Takami H."/>
            <person name="Takaki Y."/>
            <person name="Chee G.-J."/>
            <person name="Nishi S."/>
            <person name="Shimamura S."/>
            <person name="Suzuki H."/>
            <person name="Matsui S."/>
            <person name="Uchiyama I."/>
        </authorList>
    </citation>
    <scope>NUCLEOTIDE SEQUENCE [LARGE SCALE GENOMIC DNA]</scope>
    <source>
        <strain>HTA426</strain>
    </source>
</reference>
<proteinExistence type="inferred from homology"/>